<dbReference type="EMBL" id="BC086402">
    <property type="protein sequence ID" value="AAH86402.1"/>
    <property type="molecule type" value="mRNA"/>
</dbReference>
<dbReference type="RefSeq" id="NP_001014163.1">
    <property type="nucleotide sequence ID" value="NM_001014141.1"/>
</dbReference>
<dbReference type="SMR" id="Q5U1Y0"/>
<dbReference type="FunCoup" id="Q5U1Y0">
    <property type="interactions" value="1967"/>
</dbReference>
<dbReference type="STRING" id="10116.ENSRNOP00000050426"/>
<dbReference type="iPTMnet" id="Q5U1Y0"/>
<dbReference type="PhosphoSitePlus" id="Q5U1Y0"/>
<dbReference type="PaxDb" id="10116-ENSRNOP00000050426"/>
<dbReference type="Ensembl" id="ENSRNOT00000104426.1">
    <property type="protein sequence ID" value="ENSRNOP00000084423.1"/>
    <property type="gene ID" value="ENSRNOG00000030199.6"/>
</dbReference>
<dbReference type="GeneID" id="361137"/>
<dbReference type="KEGG" id="rno:361137"/>
<dbReference type="UCSC" id="RGD:1309341">
    <property type="organism name" value="rat"/>
</dbReference>
<dbReference type="AGR" id="RGD:1309341"/>
<dbReference type="CTD" id="201931"/>
<dbReference type="RGD" id="1309341">
    <property type="gene designation" value="Tmem192"/>
</dbReference>
<dbReference type="eggNOG" id="ENOG502QWR8">
    <property type="taxonomic scope" value="Eukaryota"/>
</dbReference>
<dbReference type="GeneTree" id="ENSGT00390000013749"/>
<dbReference type="InParanoid" id="Q5U1Y0"/>
<dbReference type="OrthoDB" id="90499at9989"/>
<dbReference type="PhylomeDB" id="Q5U1Y0"/>
<dbReference type="PRO" id="PR:Q5U1Y0"/>
<dbReference type="Proteomes" id="UP000002494">
    <property type="component" value="Chromosome 16"/>
</dbReference>
<dbReference type="GO" id="GO:0005770">
    <property type="term" value="C:late endosome"/>
    <property type="evidence" value="ECO:0000266"/>
    <property type="project" value="RGD"/>
</dbReference>
<dbReference type="GO" id="GO:0005765">
    <property type="term" value="C:lysosomal membrane"/>
    <property type="evidence" value="ECO:0000266"/>
    <property type="project" value="RGD"/>
</dbReference>
<dbReference type="GO" id="GO:0005764">
    <property type="term" value="C:lysosome"/>
    <property type="evidence" value="ECO:0000266"/>
    <property type="project" value="RGD"/>
</dbReference>
<dbReference type="GO" id="GO:0048471">
    <property type="term" value="C:perinuclear region of cytoplasm"/>
    <property type="evidence" value="ECO:0000266"/>
    <property type="project" value="RGD"/>
</dbReference>
<dbReference type="GO" id="GO:0042803">
    <property type="term" value="F:protein homodimerization activity"/>
    <property type="evidence" value="ECO:0000266"/>
    <property type="project" value="RGD"/>
</dbReference>
<dbReference type="InterPro" id="IPR029399">
    <property type="entry name" value="TMEM192"/>
</dbReference>
<dbReference type="PANTHER" id="PTHR31592">
    <property type="entry name" value="TRANSMEMBRANE PROTEIN 192"/>
    <property type="match status" value="1"/>
</dbReference>
<dbReference type="PANTHER" id="PTHR31592:SF1">
    <property type="entry name" value="TRANSMEMBRANE PROTEIN 192"/>
    <property type="match status" value="1"/>
</dbReference>
<dbReference type="Pfam" id="PF14802">
    <property type="entry name" value="TMEM192"/>
    <property type="match status" value="1"/>
</dbReference>
<accession>Q5U1Y0</accession>
<protein>
    <recommendedName>
        <fullName>Transmembrane protein 192</fullName>
    </recommendedName>
</protein>
<comment type="subunit">
    <text evidence="1">Homodimer.</text>
</comment>
<comment type="subcellular location">
    <subcellularLocation>
        <location evidence="2">Lysosome membrane</location>
        <topology evidence="2">Multi-pass membrane protein</topology>
    </subcellularLocation>
    <subcellularLocation>
        <location evidence="2">Late endosome</location>
    </subcellularLocation>
</comment>
<comment type="similarity">
    <text evidence="4">Belongs to the TMEM192 family.</text>
</comment>
<evidence type="ECO:0000250" key="1"/>
<evidence type="ECO:0000250" key="2">
    <source>
        <dbReference type="UniProtKB" id="Q8IY95"/>
    </source>
</evidence>
<evidence type="ECO:0000255" key="3"/>
<evidence type="ECO:0000305" key="4"/>
<reference key="1">
    <citation type="journal article" date="2004" name="Genome Res.">
        <title>The status, quality, and expansion of the NIH full-length cDNA project: the Mammalian Gene Collection (MGC).</title>
        <authorList>
            <consortium name="The MGC Project Team"/>
        </authorList>
    </citation>
    <scope>NUCLEOTIDE SEQUENCE [LARGE SCALE MRNA]</scope>
    <source>
        <tissue>Ovary</tissue>
    </source>
</reference>
<keyword id="KW-0967">Endosome</keyword>
<keyword id="KW-0458">Lysosome</keyword>
<keyword id="KW-0472">Membrane</keyword>
<keyword id="KW-0597">Phosphoprotein</keyword>
<keyword id="KW-1185">Reference proteome</keyword>
<keyword id="KW-0812">Transmembrane</keyword>
<keyword id="KW-1133">Transmembrane helix</keyword>
<gene>
    <name type="primary">Tmem192</name>
</gene>
<organism>
    <name type="scientific">Rattus norvegicus</name>
    <name type="common">Rat</name>
    <dbReference type="NCBI Taxonomy" id="10116"/>
    <lineage>
        <taxon>Eukaryota</taxon>
        <taxon>Metazoa</taxon>
        <taxon>Chordata</taxon>
        <taxon>Craniata</taxon>
        <taxon>Vertebrata</taxon>
        <taxon>Euteleostomi</taxon>
        <taxon>Mammalia</taxon>
        <taxon>Eutheria</taxon>
        <taxon>Euarchontoglires</taxon>
        <taxon>Glires</taxon>
        <taxon>Rodentia</taxon>
        <taxon>Myomorpha</taxon>
        <taxon>Muroidea</taxon>
        <taxon>Muridae</taxon>
        <taxon>Murinae</taxon>
        <taxon>Rattus</taxon>
    </lineage>
</organism>
<feature type="chain" id="PRO_0000311270" description="Transmembrane protein 192">
    <location>
        <begin position="1"/>
        <end position="266"/>
    </location>
</feature>
<feature type="topological domain" description="Cytoplasmic" evidence="3">
    <location>
        <begin position="1"/>
        <end position="52"/>
    </location>
</feature>
<feature type="transmembrane region" description="Helical" evidence="3">
    <location>
        <begin position="53"/>
        <end position="73"/>
    </location>
</feature>
<feature type="topological domain" description="Lumenal" evidence="3">
    <location>
        <begin position="74"/>
        <end position="89"/>
    </location>
</feature>
<feature type="transmembrane region" description="Helical" evidence="3">
    <location>
        <begin position="90"/>
        <end position="110"/>
    </location>
</feature>
<feature type="topological domain" description="Cytoplasmic" evidence="3">
    <location>
        <begin position="111"/>
        <end position="137"/>
    </location>
</feature>
<feature type="transmembrane region" description="Helical" evidence="3">
    <location>
        <begin position="138"/>
        <end position="158"/>
    </location>
</feature>
<feature type="topological domain" description="Lumenal" evidence="3">
    <location>
        <begin position="159"/>
        <end position="168"/>
    </location>
</feature>
<feature type="transmembrane region" description="Helical" evidence="3">
    <location>
        <begin position="169"/>
        <end position="189"/>
    </location>
</feature>
<feature type="topological domain" description="Cytoplasmic" evidence="3">
    <location>
        <begin position="190"/>
        <end position="266"/>
    </location>
</feature>
<feature type="modified residue" description="Phosphoserine" evidence="2">
    <location>
        <position position="17"/>
    </location>
</feature>
<feature type="modified residue" description="Phosphotyrosine" evidence="2">
    <location>
        <position position="213"/>
    </location>
</feature>
<feature type="modified residue" description="Phosphoserine" evidence="2">
    <location>
        <position position="229"/>
    </location>
</feature>
<feature type="modified residue" description="Phosphoserine" evidence="2">
    <location>
        <position position="230"/>
    </location>
</feature>
<proteinExistence type="evidence at transcript level"/>
<sequence length="266" mass="30252">MAAGGRLEDGSLDILQSTDDDPLLDTQPLPHHSLHAHFRPRFHPLPTVIIANLLLLIHVVFVTLAFLTGVLCLYPDPNEDKCPENYTNPLKVQTAIILGKVILWILHLLFERYIQYHHRKVRSRGYSQIYRSTRHLKALALTIHSSGNTALLLLLCVQYSFPEPNKLYLELILAVLALELICSLSCLVLYTVKIRRFNKAKPQPDVLEEEKCYAYPSNIASETGFRTVSSLEEIVEKQGDIIVYLKRHNALLSKRLLELATQPART</sequence>
<name>TM192_RAT</name>